<keyword id="KW-0285">Flavoprotein</keyword>
<keyword id="KW-0288">FMN</keyword>
<keyword id="KW-0521">NADP</keyword>
<keyword id="KW-0560">Oxidoreductase</keyword>
<keyword id="KW-1185">Reference proteome</keyword>
<keyword id="KW-0694">RNA-binding</keyword>
<keyword id="KW-0819">tRNA processing</keyword>
<keyword id="KW-0820">tRNA-binding</keyword>
<proteinExistence type="inferred from homology"/>
<sequence>MIKIGNIELSSNVILAPMSDVTDLEFRKLVKRFGAGLVVSEMIASRAMIMKSRQSMQKCAIMHDDPTSACVQLAGCEPDVIAEAAKMNEDMGAKIIDLNFGCPAKKVVGGYAGSALMRDEQLAAKIFEATVKAVKIPVTVKMRIGWDDNTRNAPTLAKIAANSGVQMVTVHGRTRCQFYSGNANWDFIRTVKEAVKIPVIANGDITNFAKAKEALQRSGADGIMVGRGVYGKPWLISQIAYYLKTGKEKPAPSIAEQLDIITKHYDAIIDYYGKSVGVPIARKHIIWYSNGLPSSAEFRCTVNLMKDPIAVKEKIAEFYMSVMDANK</sequence>
<accession>Q9ZED2</accession>
<name>DUS_RICPR</name>
<organism>
    <name type="scientific">Rickettsia prowazekii (strain Madrid E)</name>
    <dbReference type="NCBI Taxonomy" id="272947"/>
    <lineage>
        <taxon>Bacteria</taxon>
        <taxon>Pseudomonadati</taxon>
        <taxon>Pseudomonadota</taxon>
        <taxon>Alphaproteobacteria</taxon>
        <taxon>Rickettsiales</taxon>
        <taxon>Rickettsiaceae</taxon>
        <taxon>Rickettsieae</taxon>
        <taxon>Rickettsia</taxon>
        <taxon>typhus group</taxon>
    </lineage>
</organism>
<evidence type="ECO:0000250" key="1">
    <source>
        <dbReference type="UniProtKB" id="P33371"/>
    </source>
</evidence>
<evidence type="ECO:0000250" key="2">
    <source>
        <dbReference type="UniProtKB" id="Q5SMC7"/>
    </source>
</evidence>
<evidence type="ECO:0000305" key="3"/>
<dbReference type="EC" id="1.3.1.-"/>
<dbReference type="EMBL" id="AJ235270">
    <property type="protein sequence ID" value="CAA14483.1"/>
    <property type="status" value="ALT_INIT"/>
    <property type="molecule type" value="Genomic_DNA"/>
</dbReference>
<dbReference type="PIR" id="D71708">
    <property type="entry name" value="D71708"/>
</dbReference>
<dbReference type="RefSeq" id="NP_220406.1">
    <property type="nucleotide sequence ID" value="NC_000963.1"/>
</dbReference>
<dbReference type="SMR" id="Q9ZED2"/>
<dbReference type="STRING" id="272947.gene:17555094"/>
<dbReference type="EnsemblBacteria" id="CAA14483">
    <property type="protein sequence ID" value="CAA14483"/>
    <property type="gene ID" value="CAA14483"/>
</dbReference>
<dbReference type="KEGG" id="rpr:RP011"/>
<dbReference type="PATRIC" id="fig|272947.5.peg.11"/>
<dbReference type="eggNOG" id="COG0042">
    <property type="taxonomic scope" value="Bacteria"/>
</dbReference>
<dbReference type="HOGENOM" id="CLU_013299_0_3_5"/>
<dbReference type="OrthoDB" id="9764501at2"/>
<dbReference type="Proteomes" id="UP000002480">
    <property type="component" value="Chromosome"/>
</dbReference>
<dbReference type="GO" id="GO:0050660">
    <property type="term" value="F:flavin adenine dinucleotide binding"/>
    <property type="evidence" value="ECO:0007669"/>
    <property type="project" value="InterPro"/>
</dbReference>
<dbReference type="GO" id="GO:0000049">
    <property type="term" value="F:tRNA binding"/>
    <property type="evidence" value="ECO:0007669"/>
    <property type="project" value="UniProtKB-KW"/>
</dbReference>
<dbReference type="GO" id="GO:0017150">
    <property type="term" value="F:tRNA dihydrouridine synthase activity"/>
    <property type="evidence" value="ECO:0007669"/>
    <property type="project" value="InterPro"/>
</dbReference>
<dbReference type="CDD" id="cd02801">
    <property type="entry name" value="DUS_like_FMN"/>
    <property type="match status" value="1"/>
</dbReference>
<dbReference type="Gene3D" id="3.20.20.70">
    <property type="entry name" value="Aldolase class I"/>
    <property type="match status" value="1"/>
</dbReference>
<dbReference type="Gene3D" id="1.10.1200.80">
    <property type="entry name" value="Putative flavin oxidoreducatase, domain 2"/>
    <property type="match status" value="1"/>
</dbReference>
<dbReference type="InterPro" id="IPR013785">
    <property type="entry name" value="Aldolase_TIM"/>
</dbReference>
<dbReference type="InterPro" id="IPR035587">
    <property type="entry name" value="DUS-like_FMN-bd"/>
</dbReference>
<dbReference type="InterPro" id="IPR001269">
    <property type="entry name" value="DUS_fam"/>
</dbReference>
<dbReference type="InterPro" id="IPR004652">
    <property type="entry name" value="DusB-like"/>
</dbReference>
<dbReference type="InterPro" id="IPR024036">
    <property type="entry name" value="tRNA-dHydroUridine_Synthase_C"/>
</dbReference>
<dbReference type="InterPro" id="IPR018517">
    <property type="entry name" value="tRNA_hU_synthase_CS"/>
</dbReference>
<dbReference type="NCBIfam" id="TIGR00737">
    <property type="entry name" value="nifR3_yhdG"/>
    <property type="match status" value="1"/>
</dbReference>
<dbReference type="PANTHER" id="PTHR45846">
    <property type="entry name" value="TRNA-DIHYDROURIDINE(47) SYNTHASE [NAD(P)(+)]-LIKE"/>
    <property type="match status" value="1"/>
</dbReference>
<dbReference type="PANTHER" id="PTHR45846:SF1">
    <property type="entry name" value="TRNA-DIHYDROURIDINE(47) SYNTHASE [NAD(P)(+)]-LIKE"/>
    <property type="match status" value="1"/>
</dbReference>
<dbReference type="Pfam" id="PF01207">
    <property type="entry name" value="Dus"/>
    <property type="match status" value="1"/>
</dbReference>
<dbReference type="PIRSF" id="PIRSF006621">
    <property type="entry name" value="Dus"/>
    <property type="match status" value="1"/>
</dbReference>
<dbReference type="SUPFAM" id="SSF51395">
    <property type="entry name" value="FMN-linked oxidoreductases"/>
    <property type="match status" value="1"/>
</dbReference>
<dbReference type="PROSITE" id="PS01136">
    <property type="entry name" value="UPF0034"/>
    <property type="match status" value="1"/>
</dbReference>
<reference key="1">
    <citation type="journal article" date="1998" name="Nature">
        <title>The genome sequence of Rickettsia prowazekii and the origin of mitochondria.</title>
        <authorList>
            <person name="Andersson S.G.E."/>
            <person name="Zomorodipour A."/>
            <person name="Andersson J.O."/>
            <person name="Sicheritz-Ponten T."/>
            <person name="Alsmark U.C.M."/>
            <person name="Podowski R.M."/>
            <person name="Naeslund A.K."/>
            <person name="Eriksson A.-S."/>
            <person name="Winkler H.H."/>
            <person name="Kurland C.G."/>
        </authorList>
    </citation>
    <scope>NUCLEOTIDE SEQUENCE [LARGE SCALE GENOMIC DNA]</scope>
    <source>
        <strain>Madrid E</strain>
    </source>
</reference>
<protein>
    <recommendedName>
        <fullName>Probable tRNA-dihydrouridine synthase</fullName>
        <ecNumber>1.3.1.-</ecNumber>
    </recommendedName>
</protein>
<gene>
    <name type="primary">dus</name>
    <name type="ordered locus">RP011</name>
</gene>
<feature type="chain" id="PRO_0000162141" description="Probable tRNA-dihydrouridine synthase">
    <location>
        <begin position="1"/>
        <end position="327"/>
    </location>
</feature>
<feature type="active site" description="Proton donor" evidence="2">
    <location>
        <position position="102"/>
    </location>
</feature>
<feature type="binding site" evidence="1">
    <location>
        <begin position="17"/>
        <end position="19"/>
    </location>
    <ligand>
        <name>FMN</name>
        <dbReference type="ChEBI" id="CHEBI:58210"/>
    </ligand>
</feature>
<feature type="binding site" evidence="1">
    <location>
        <position position="72"/>
    </location>
    <ligand>
        <name>FMN</name>
        <dbReference type="ChEBI" id="CHEBI:58210"/>
    </ligand>
</feature>
<feature type="binding site" evidence="1">
    <location>
        <position position="141"/>
    </location>
    <ligand>
        <name>FMN</name>
        <dbReference type="ChEBI" id="CHEBI:58210"/>
    </ligand>
</feature>
<feature type="binding site" evidence="1">
    <location>
        <begin position="202"/>
        <end position="204"/>
    </location>
    <ligand>
        <name>FMN</name>
        <dbReference type="ChEBI" id="CHEBI:58210"/>
    </ligand>
</feature>
<feature type="binding site" evidence="1">
    <location>
        <begin position="226"/>
        <end position="227"/>
    </location>
    <ligand>
        <name>FMN</name>
        <dbReference type="ChEBI" id="CHEBI:58210"/>
    </ligand>
</feature>
<comment type="function">
    <text evidence="1">Catalyzes the synthesis of 5,6-dihydrouridine (D), a modified base found in the D-loop of most tRNAs, via the reduction of the C5-C6 double bond in target uridines.</text>
</comment>
<comment type="catalytic activity">
    <reaction evidence="1">
        <text>a 5,6-dihydrouridine in tRNA + NAD(+) = a uridine in tRNA + NADH + H(+)</text>
        <dbReference type="Rhea" id="RHEA:54452"/>
        <dbReference type="Rhea" id="RHEA-COMP:13339"/>
        <dbReference type="Rhea" id="RHEA-COMP:13887"/>
        <dbReference type="ChEBI" id="CHEBI:15378"/>
        <dbReference type="ChEBI" id="CHEBI:57540"/>
        <dbReference type="ChEBI" id="CHEBI:57945"/>
        <dbReference type="ChEBI" id="CHEBI:65315"/>
        <dbReference type="ChEBI" id="CHEBI:74443"/>
    </reaction>
</comment>
<comment type="catalytic activity">
    <reaction evidence="1">
        <text>a 5,6-dihydrouridine in tRNA + NADP(+) = a uridine in tRNA + NADPH + H(+)</text>
        <dbReference type="Rhea" id="RHEA:23624"/>
        <dbReference type="Rhea" id="RHEA-COMP:13339"/>
        <dbReference type="Rhea" id="RHEA-COMP:13887"/>
        <dbReference type="ChEBI" id="CHEBI:15378"/>
        <dbReference type="ChEBI" id="CHEBI:57783"/>
        <dbReference type="ChEBI" id="CHEBI:58349"/>
        <dbReference type="ChEBI" id="CHEBI:65315"/>
        <dbReference type="ChEBI" id="CHEBI:74443"/>
    </reaction>
</comment>
<comment type="cofactor">
    <cofactor evidence="1">
        <name>FMN</name>
        <dbReference type="ChEBI" id="CHEBI:58210"/>
    </cofactor>
</comment>
<comment type="similarity">
    <text evidence="3">Belongs to the Dus family.</text>
</comment>
<comment type="sequence caution" evidence="3">
    <conflict type="erroneous initiation">
        <sequence resource="EMBL-CDS" id="CAA14483"/>
    </conflict>
</comment>